<organism>
    <name type="scientific">Populus euphratica</name>
    <name type="common">Euphrates poplar</name>
    <dbReference type="NCBI Taxonomy" id="75702"/>
    <lineage>
        <taxon>Eukaryota</taxon>
        <taxon>Viridiplantae</taxon>
        <taxon>Streptophyta</taxon>
        <taxon>Embryophyta</taxon>
        <taxon>Tracheophyta</taxon>
        <taxon>Spermatophyta</taxon>
        <taxon>Magnoliopsida</taxon>
        <taxon>eudicotyledons</taxon>
        <taxon>Gunneridae</taxon>
        <taxon>Pentapetalae</taxon>
        <taxon>rosids</taxon>
        <taxon>fabids</taxon>
        <taxon>Malpighiales</taxon>
        <taxon>Salicaceae</taxon>
        <taxon>Saliceae</taxon>
        <taxon>Populus</taxon>
    </lineage>
</organism>
<comment type="function">
    <text evidence="3">Key enzyme in myo-inositol biosynthesis pathway that catalyzes the conversion of glucose 6-phosphate to 1-myo-inositol 1-phosphate in a NAD-dependent manner (PubMed:29579299). May play a role in oxidative stress resistance and influences ascorbate levels (PubMed:29579299).</text>
</comment>
<comment type="catalytic activity">
    <reaction evidence="6">
        <text>D-glucose 6-phosphate = 1D-myo-inositol 3-phosphate</text>
        <dbReference type="Rhea" id="RHEA:10716"/>
        <dbReference type="ChEBI" id="CHEBI:58401"/>
        <dbReference type="ChEBI" id="CHEBI:61548"/>
        <dbReference type="EC" id="5.5.1.4"/>
    </reaction>
</comment>
<comment type="cofactor">
    <cofactor evidence="2">
        <name>NAD(+)</name>
        <dbReference type="ChEBI" id="CHEBI:57540"/>
    </cofactor>
</comment>
<comment type="pathway">
    <text evidence="5">Polyol metabolism; myo-inositol biosynthesis; myo-inositol from D-glucose 6-phosphate: step 1/2.</text>
</comment>
<comment type="subcellular location">
    <subcellularLocation>
        <location evidence="3">Cytoplasm</location>
        <location evidence="3">Cytosol</location>
    </subcellularLocation>
    <subcellularLocation>
        <location evidence="3">Nucleus</location>
    </subcellularLocation>
</comment>
<comment type="induction">
    <text evidence="3">Induced by sodium chloride, copper sulfate and poly(ethylene glycol) 6000.</text>
</comment>
<comment type="similarity">
    <text evidence="5">Belongs to the myo-inositol 1-phosphate synthase family.</text>
</comment>
<dbReference type="EC" id="5.5.1.4" evidence="6"/>
<dbReference type="SMR" id="C0HM53"/>
<dbReference type="KEGG" id="peu:105130253"/>
<dbReference type="OrthoDB" id="5253at3646"/>
<dbReference type="UniPathway" id="UPA00823">
    <property type="reaction ID" value="UER00787"/>
</dbReference>
<dbReference type="Proteomes" id="UP000694918">
    <property type="component" value="Unplaced"/>
</dbReference>
<dbReference type="GO" id="GO:0005829">
    <property type="term" value="C:cytosol"/>
    <property type="evidence" value="ECO:0000314"/>
    <property type="project" value="UniProtKB"/>
</dbReference>
<dbReference type="GO" id="GO:0005634">
    <property type="term" value="C:nucleus"/>
    <property type="evidence" value="ECO:0000314"/>
    <property type="project" value="UniProtKB"/>
</dbReference>
<dbReference type="GO" id="GO:0004512">
    <property type="term" value="F:inositol-3-phosphate synthase activity"/>
    <property type="evidence" value="ECO:0000316"/>
    <property type="project" value="UniProtKB"/>
</dbReference>
<dbReference type="GO" id="GO:0006021">
    <property type="term" value="P:inositol biosynthetic process"/>
    <property type="evidence" value="ECO:0000316"/>
    <property type="project" value="UniProtKB"/>
</dbReference>
<dbReference type="GO" id="GO:0008654">
    <property type="term" value="P:phospholipid biosynthetic process"/>
    <property type="evidence" value="ECO:0007669"/>
    <property type="project" value="UniProtKB-KW"/>
</dbReference>
<dbReference type="FunFam" id="3.30.360.10:FF:000040">
    <property type="entry name" value="Inositol 1-phosphate synthase"/>
    <property type="match status" value="1"/>
</dbReference>
<dbReference type="FunFam" id="3.40.50.720:FF:000107">
    <property type="entry name" value="inositol-3-phosphate synthase"/>
    <property type="match status" value="1"/>
</dbReference>
<dbReference type="FunFam" id="3.40.50.720:FF:000069">
    <property type="entry name" value="Inositol-3-phosphate synthase 1"/>
    <property type="match status" value="1"/>
</dbReference>
<dbReference type="Gene3D" id="3.40.50.720">
    <property type="entry name" value="NAD(P)-binding Rossmann-like Domain"/>
    <property type="match status" value="2"/>
</dbReference>
<dbReference type="InterPro" id="IPR002587">
    <property type="entry name" value="Myo-inos-1-P_Synthase"/>
</dbReference>
<dbReference type="InterPro" id="IPR013021">
    <property type="entry name" value="Myo-inos-1-P_Synthase_GAPDH"/>
</dbReference>
<dbReference type="InterPro" id="IPR036291">
    <property type="entry name" value="NAD(P)-bd_dom_sf"/>
</dbReference>
<dbReference type="PANTHER" id="PTHR11510">
    <property type="entry name" value="MYO-INOSITOL-1 PHOSPHATE SYNTHASE"/>
    <property type="match status" value="1"/>
</dbReference>
<dbReference type="Pfam" id="PF01658">
    <property type="entry name" value="Inos-1-P_synth"/>
    <property type="match status" value="1"/>
</dbReference>
<dbReference type="Pfam" id="PF07994">
    <property type="entry name" value="NAD_binding_5"/>
    <property type="match status" value="1"/>
</dbReference>
<dbReference type="PIRSF" id="PIRSF015578">
    <property type="entry name" value="Myoinos-ppht_syn"/>
    <property type="match status" value="1"/>
</dbReference>
<dbReference type="SUPFAM" id="SSF55347">
    <property type="entry name" value="Glyceraldehyde-3-phosphate dehydrogenase-like, C-terminal domain"/>
    <property type="match status" value="1"/>
</dbReference>
<dbReference type="SUPFAM" id="SSF51735">
    <property type="entry name" value="NAD(P)-binding Rossmann-fold domains"/>
    <property type="match status" value="1"/>
</dbReference>
<name>INO1_POPEU</name>
<reference evidence="5" key="1">
    <citation type="journal article" date="2018" name="Tree Physiol.">
        <title>Overexpression of PeMIPS1 confers tolerance to salt and copper stresses by scavenging reactive oxygen species in transgenic poplar.</title>
        <authorList>
            <person name="Zhang J."/>
            <person name="Yang N."/>
            <person name="Li Y."/>
            <person name="Zhu S."/>
            <person name="Zhang S."/>
            <person name="Sun Y."/>
            <person name="Zhang H.X."/>
            <person name="Wang L."/>
            <person name="Su H."/>
        </authorList>
    </citation>
    <scope>FUNCTION</scope>
    <scope>CATALYTIC ACTIVITY</scope>
    <scope>SUBCELLULAR LOCATION</scope>
    <scope>INDUCTION</scope>
</reference>
<protein>
    <recommendedName>
        <fullName evidence="5">Inositol-3-phosphate synthase 1</fullName>
        <ecNumber evidence="6">5.5.1.4</ecNumber>
    </recommendedName>
    <alternativeName>
        <fullName evidence="5">MIP synthase 1</fullName>
    </alternativeName>
    <alternativeName>
        <fullName evidence="5">Myo-inositol 1-phosphate synthase 1</fullName>
    </alternativeName>
    <alternativeName>
        <fullName evidence="4">PeMIPS 1</fullName>
    </alternativeName>
</protein>
<sequence length="510" mass="56535">MFIEKFKVESPNVKYTEDEIHSVYNYETTELVHENKNGSYQWTVKPKTVQYEFKTDIHVPKLGVMLVGWGGNNGSTLTGGVIANREGISWATKDKVQQANYFGSLTQASSIRVGSFNGEEIYAPFKSLLPMVNPDDIVFGGWDISDMNLADAMARAKVFDFDLQKQLRPYMESMVPLPGIYDPDFIAANQDSRANNVIKGTKKEQVQQIIKDIREFKEKNKVDKVVVLWTANTERYSNIVVGLNDTMENLLAAVEKDESEISPSTLYALACIYENIPFINGSPQNTFVPGLVDLAIKRNSLIGGDDFKSGQTKMKSVLVDFLVGAGIKPTSIVSYNHLGNNDGMNLSAPQTFRSKEISKSNVVDDMVSSNGILYEPGEHPDHVVVIKYVPYVGDSKRAMDEYTSEIFMGGKNTIVLHNTCEDSLLAAPIILDLVLLAELSTRIQLKGEAEGKFHSFHPVATILSYLTKAPLVPPGTPVVNALSKQRAMLENILRACVGLAPENNMILEYK</sequence>
<proteinExistence type="evidence at protein level"/>
<keyword id="KW-0963">Cytoplasm</keyword>
<keyword id="KW-0398">Inositol biosynthesis</keyword>
<keyword id="KW-0413">Isomerase</keyword>
<keyword id="KW-0444">Lipid biosynthesis</keyword>
<keyword id="KW-0443">Lipid metabolism</keyword>
<keyword id="KW-0520">NAD</keyword>
<keyword id="KW-0539">Nucleus</keyword>
<keyword id="KW-0594">Phospholipid biosynthesis</keyword>
<keyword id="KW-1208">Phospholipid metabolism</keyword>
<keyword id="KW-1185">Reference proteome</keyword>
<gene>
    <name evidence="5" type="primary">IPS1</name>
    <name evidence="4" type="synonym">MIPS1</name>
</gene>
<evidence type="ECO:0000250" key="1">
    <source>
        <dbReference type="UniProtKB" id="P11986"/>
    </source>
</evidence>
<evidence type="ECO:0000250" key="2">
    <source>
        <dbReference type="UniProtKB" id="P42801"/>
    </source>
</evidence>
<evidence type="ECO:0000269" key="3">
    <source>
    </source>
</evidence>
<evidence type="ECO:0000303" key="4">
    <source>
    </source>
</evidence>
<evidence type="ECO:0000305" key="5"/>
<evidence type="ECO:0000305" key="6">
    <source>
    </source>
</evidence>
<feature type="chain" id="PRO_0000456786" description="Inositol-3-phosphate synthase 1">
    <location>
        <begin position="1"/>
        <end position="510"/>
    </location>
</feature>
<feature type="binding site" evidence="1">
    <location>
        <position position="70"/>
    </location>
    <ligand>
        <name>NAD(+)</name>
        <dbReference type="ChEBI" id="CHEBI:57540"/>
    </ligand>
</feature>
<feature type="binding site" evidence="1">
    <location>
        <position position="71"/>
    </location>
    <ligand>
        <name>NAD(+)</name>
        <dbReference type="ChEBI" id="CHEBI:57540"/>
    </ligand>
</feature>
<feature type="binding site" evidence="1">
    <location>
        <position position="72"/>
    </location>
    <ligand>
        <name>NAD(+)</name>
        <dbReference type="ChEBI" id="CHEBI:57540"/>
    </ligand>
</feature>
<feature type="binding site" evidence="1">
    <location>
        <position position="73"/>
    </location>
    <ligand>
        <name>NAD(+)</name>
        <dbReference type="ChEBI" id="CHEBI:57540"/>
    </ligand>
</feature>
<feature type="binding site" evidence="1">
    <location>
        <position position="143"/>
    </location>
    <ligand>
        <name>NAD(+)</name>
        <dbReference type="ChEBI" id="CHEBI:57540"/>
    </ligand>
</feature>
<feature type="binding site" evidence="1">
    <location>
        <position position="180"/>
    </location>
    <ligand>
        <name>NAD(+)</name>
        <dbReference type="ChEBI" id="CHEBI:57540"/>
    </ligand>
</feature>
<feature type="binding site" evidence="1">
    <location>
        <position position="190"/>
    </location>
    <ligand>
        <name>NAD(+)</name>
        <dbReference type="ChEBI" id="CHEBI:57540"/>
    </ligand>
</feature>
<feature type="binding site" evidence="1">
    <location>
        <position position="193"/>
    </location>
    <ligand>
        <name>NAD(+)</name>
        <dbReference type="ChEBI" id="CHEBI:57540"/>
    </ligand>
</feature>
<feature type="binding site" evidence="1">
    <location>
        <position position="230"/>
    </location>
    <ligand>
        <name>NAD(+)</name>
        <dbReference type="ChEBI" id="CHEBI:57540"/>
    </ligand>
</feature>
<feature type="binding site" evidence="1">
    <location>
        <position position="231"/>
    </location>
    <ligand>
        <name>NAD(+)</name>
        <dbReference type="ChEBI" id="CHEBI:57540"/>
    </ligand>
</feature>
<feature type="binding site" evidence="1">
    <location>
        <position position="232"/>
    </location>
    <ligand>
        <name>NAD(+)</name>
        <dbReference type="ChEBI" id="CHEBI:57540"/>
    </ligand>
</feature>
<feature type="binding site" evidence="1">
    <location>
        <position position="233"/>
    </location>
    <ligand>
        <name>NAD(+)</name>
        <dbReference type="ChEBI" id="CHEBI:57540"/>
    </ligand>
</feature>
<feature type="binding site" evidence="1">
    <location>
        <position position="281"/>
    </location>
    <ligand>
        <name>NAD(+)</name>
        <dbReference type="ChEBI" id="CHEBI:57540"/>
    </ligand>
</feature>
<feature type="binding site" evidence="1">
    <location>
        <position position="282"/>
    </location>
    <ligand>
        <name>NAD(+)</name>
        <dbReference type="ChEBI" id="CHEBI:57540"/>
    </ligand>
</feature>
<feature type="binding site" evidence="1">
    <location>
        <position position="306"/>
    </location>
    <ligand>
        <name>NAD(+)</name>
        <dbReference type="ChEBI" id="CHEBI:57540"/>
    </ligand>
</feature>
<feature type="binding site" evidence="1">
    <location>
        <position position="309"/>
    </location>
    <ligand>
        <name>NAD(+)</name>
        <dbReference type="ChEBI" id="CHEBI:57540"/>
    </ligand>
</feature>
<feature type="binding site" evidence="1">
    <location>
        <position position="340"/>
    </location>
    <ligand>
        <name>NAD(+)</name>
        <dbReference type="ChEBI" id="CHEBI:57540"/>
    </ligand>
</feature>
<feature type="binding site" evidence="1">
    <location>
        <position position="341"/>
    </location>
    <ligand>
        <name>NAD(+)</name>
        <dbReference type="ChEBI" id="CHEBI:57540"/>
    </ligand>
</feature>
<feature type="binding site" evidence="1">
    <location>
        <position position="342"/>
    </location>
    <ligand>
        <name>NAD(+)</name>
        <dbReference type="ChEBI" id="CHEBI:57540"/>
    </ligand>
</feature>
<feature type="binding site" evidence="1">
    <location>
        <position position="355"/>
    </location>
    <ligand>
        <name>NAD(+)</name>
        <dbReference type="ChEBI" id="CHEBI:57540"/>
    </ligand>
</feature>
<feature type="binding site" evidence="1">
    <location>
        <position position="393"/>
    </location>
    <ligand>
        <name>NAD(+)</name>
        <dbReference type="ChEBI" id="CHEBI:57540"/>
    </ligand>
</feature>
<feature type="binding site" evidence="1">
    <location>
        <position position="394"/>
    </location>
    <ligand>
        <name>NAD(+)</name>
        <dbReference type="ChEBI" id="CHEBI:57540"/>
    </ligand>
</feature>
<feature type="binding site" evidence="1">
    <location>
        <position position="422"/>
    </location>
    <ligand>
        <name>NAD(+)</name>
        <dbReference type="ChEBI" id="CHEBI:57540"/>
    </ligand>
</feature>
<feature type="binding site" evidence="1">
    <location>
        <position position="423"/>
    </location>
    <ligand>
        <name>NAD(+)</name>
        <dbReference type="ChEBI" id="CHEBI:57540"/>
    </ligand>
</feature>
<accession>C0HM53</accession>